<proteinExistence type="inferred from homology"/>
<reference key="1">
    <citation type="journal article" date="2014" name="Genome Announc.">
        <title>Complete Genome Sequence of the Extreme Thermophile Dictyoglomus thermophilum H-6-12.</title>
        <authorList>
            <person name="Coil D.A."/>
            <person name="Badger J.H."/>
            <person name="Forberger H.C."/>
            <person name="Riggs F."/>
            <person name="Madupu R."/>
            <person name="Fedorova N."/>
            <person name="Ward N."/>
            <person name="Robb F.T."/>
            <person name="Eisen J.A."/>
        </authorList>
    </citation>
    <scope>NUCLEOTIDE SEQUENCE [LARGE SCALE GENOMIC DNA]</scope>
    <source>
        <strain>ATCC 35947 / DSM 3960 / H-6-12</strain>
    </source>
</reference>
<organism>
    <name type="scientific">Dictyoglomus thermophilum (strain ATCC 35947 / DSM 3960 / H-6-12)</name>
    <dbReference type="NCBI Taxonomy" id="309799"/>
    <lineage>
        <taxon>Bacteria</taxon>
        <taxon>Pseudomonadati</taxon>
        <taxon>Dictyoglomota</taxon>
        <taxon>Dictyoglomia</taxon>
        <taxon>Dictyoglomales</taxon>
        <taxon>Dictyoglomaceae</taxon>
        <taxon>Dictyoglomus</taxon>
    </lineage>
</organism>
<gene>
    <name evidence="1" type="primary">def</name>
    <name type="ordered locus">DICTH_1335</name>
</gene>
<name>DEF_DICT6</name>
<dbReference type="EC" id="3.5.1.88" evidence="1"/>
<dbReference type="EMBL" id="CP001146">
    <property type="protein sequence ID" value="ACI19172.1"/>
    <property type="molecule type" value="Genomic_DNA"/>
</dbReference>
<dbReference type="RefSeq" id="WP_012547804.1">
    <property type="nucleotide sequence ID" value="NC_011297.1"/>
</dbReference>
<dbReference type="SMR" id="B5YF46"/>
<dbReference type="STRING" id="309799.DICTH_1335"/>
<dbReference type="PaxDb" id="309799-DICTH_1335"/>
<dbReference type="KEGG" id="dth:DICTH_1335"/>
<dbReference type="eggNOG" id="COG0242">
    <property type="taxonomic scope" value="Bacteria"/>
</dbReference>
<dbReference type="HOGENOM" id="CLU_061901_4_2_0"/>
<dbReference type="OrthoDB" id="9804313at2"/>
<dbReference type="Proteomes" id="UP000001733">
    <property type="component" value="Chromosome"/>
</dbReference>
<dbReference type="GO" id="GO:0046872">
    <property type="term" value="F:metal ion binding"/>
    <property type="evidence" value="ECO:0007669"/>
    <property type="project" value="UniProtKB-KW"/>
</dbReference>
<dbReference type="GO" id="GO:0042586">
    <property type="term" value="F:peptide deformylase activity"/>
    <property type="evidence" value="ECO:0007669"/>
    <property type="project" value="UniProtKB-UniRule"/>
</dbReference>
<dbReference type="GO" id="GO:0043686">
    <property type="term" value="P:co-translational protein modification"/>
    <property type="evidence" value="ECO:0007669"/>
    <property type="project" value="TreeGrafter"/>
</dbReference>
<dbReference type="GO" id="GO:0006412">
    <property type="term" value="P:translation"/>
    <property type="evidence" value="ECO:0007669"/>
    <property type="project" value="UniProtKB-UniRule"/>
</dbReference>
<dbReference type="CDD" id="cd00487">
    <property type="entry name" value="Pep_deformylase"/>
    <property type="match status" value="1"/>
</dbReference>
<dbReference type="Gene3D" id="3.90.45.10">
    <property type="entry name" value="Peptide deformylase"/>
    <property type="match status" value="1"/>
</dbReference>
<dbReference type="HAMAP" id="MF_00163">
    <property type="entry name" value="Pep_deformylase"/>
    <property type="match status" value="1"/>
</dbReference>
<dbReference type="InterPro" id="IPR023635">
    <property type="entry name" value="Peptide_deformylase"/>
</dbReference>
<dbReference type="InterPro" id="IPR036821">
    <property type="entry name" value="Peptide_deformylase_sf"/>
</dbReference>
<dbReference type="NCBIfam" id="TIGR00079">
    <property type="entry name" value="pept_deformyl"/>
    <property type="match status" value="1"/>
</dbReference>
<dbReference type="NCBIfam" id="NF001159">
    <property type="entry name" value="PRK00150.1-3"/>
    <property type="match status" value="1"/>
</dbReference>
<dbReference type="PANTHER" id="PTHR10458">
    <property type="entry name" value="PEPTIDE DEFORMYLASE"/>
    <property type="match status" value="1"/>
</dbReference>
<dbReference type="PANTHER" id="PTHR10458:SF22">
    <property type="entry name" value="PEPTIDE DEFORMYLASE"/>
    <property type="match status" value="1"/>
</dbReference>
<dbReference type="Pfam" id="PF01327">
    <property type="entry name" value="Pep_deformylase"/>
    <property type="match status" value="1"/>
</dbReference>
<dbReference type="PIRSF" id="PIRSF004749">
    <property type="entry name" value="Pep_def"/>
    <property type="match status" value="1"/>
</dbReference>
<dbReference type="PRINTS" id="PR01576">
    <property type="entry name" value="PDEFORMYLASE"/>
</dbReference>
<dbReference type="SUPFAM" id="SSF56420">
    <property type="entry name" value="Peptide deformylase"/>
    <property type="match status" value="1"/>
</dbReference>
<evidence type="ECO:0000255" key="1">
    <source>
        <dbReference type="HAMAP-Rule" id="MF_00163"/>
    </source>
</evidence>
<keyword id="KW-0378">Hydrolase</keyword>
<keyword id="KW-0408">Iron</keyword>
<keyword id="KW-0479">Metal-binding</keyword>
<keyword id="KW-0648">Protein biosynthesis</keyword>
<protein>
    <recommendedName>
        <fullName evidence="1">Peptide deformylase</fullName>
        <shortName evidence="1">PDF</shortName>
        <ecNumber evidence="1">3.5.1.88</ecNumber>
    </recommendedName>
    <alternativeName>
        <fullName evidence="1">Polypeptide deformylase</fullName>
    </alternativeName>
</protein>
<accession>B5YF46</accession>
<sequence length="153" mass="17297">MIREIRKVGDPILKTKAKKVEKIDEKVKELARDMIETMKFCNGVGLAAPQVGESLRIIVVDYEDNPIVLINPEIIEMSGEELDYEGCLSVPGVEVPVKRAERIVFKAQDLDGRTKKYRAKGLLARVVQHEVDHLDGMLILDRAVEETLKTEEK</sequence>
<comment type="function">
    <text evidence="1">Removes the formyl group from the N-terminal Met of newly synthesized proteins. Requires at least a dipeptide for an efficient rate of reaction. N-terminal L-methionine is a prerequisite for activity but the enzyme has broad specificity at other positions.</text>
</comment>
<comment type="catalytic activity">
    <reaction evidence="1">
        <text>N-terminal N-formyl-L-methionyl-[peptide] + H2O = N-terminal L-methionyl-[peptide] + formate</text>
        <dbReference type="Rhea" id="RHEA:24420"/>
        <dbReference type="Rhea" id="RHEA-COMP:10639"/>
        <dbReference type="Rhea" id="RHEA-COMP:10640"/>
        <dbReference type="ChEBI" id="CHEBI:15377"/>
        <dbReference type="ChEBI" id="CHEBI:15740"/>
        <dbReference type="ChEBI" id="CHEBI:49298"/>
        <dbReference type="ChEBI" id="CHEBI:64731"/>
        <dbReference type="EC" id="3.5.1.88"/>
    </reaction>
</comment>
<comment type="cofactor">
    <cofactor evidence="1">
        <name>Fe(2+)</name>
        <dbReference type="ChEBI" id="CHEBI:29033"/>
    </cofactor>
    <text evidence="1">Binds 1 Fe(2+) ion.</text>
</comment>
<comment type="similarity">
    <text evidence="1">Belongs to the polypeptide deformylase family.</text>
</comment>
<feature type="chain" id="PRO_1000097305" description="Peptide deformylase">
    <location>
        <begin position="1"/>
        <end position="153"/>
    </location>
</feature>
<feature type="active site" evidence="1">
    <location>
        <position position="130"/>
    </location>
</feature>
<feature type="binding site" evidence="1">
    <location>
        <position position="87"/>
    </location>
    <ligand>
        <name>Fe cation</name>
        <dbReference type="ChEBI" id="CHEBI:24875"/>
    </ligand>
</feature>
<feature type="binding site" evidence="1">
    <location>
        <position position="129"/>
    </location>
    <ligand>
        <name>Fe cation</name>
        <dbReference type="ChEBI" id="CHEBI:24875"/>
    </ligand>
</feature>
<feature type="binding site" evidence="1">
    <location>
        <position position="133"/>
    </location>
    <ligand>
        <name>Fe cation</name>
        <dbReference type="ChEBI" id="CHEBI:24875"/>
    </ligand>
</feature>